<organism>
    <name type="scientific">Sinorhizobium fredii (strain NBRC 101917 / NGR234)</name>
    <dbReference type="NCBI Taxonomy" id="394"/>
    <lineage>
        <taxon>Bacteria</taxon>
        <taxon>Pseudomonadati</taxon>
        <taxon>Pseudomonadota</taxon>
        <taxon>Alphaproteobacteria</taxon>
        <taxon>Hyphomicrobiales</taxon>
        <taxon>Rhizobiaceae</taxon>
        <taxon>Sinorhizobium/Ensifer group</taxon>
        <taxon>Sinorhizobium</taxon>
    </lineage>
</organism>
<sequence length="84" mass="9940">MDISRAEQRILHHLAQGGRIEIKREGKTIAEIRCFTRDGWVYPGVDLELFRKLKRKRAIRSSSGRPYRITERGLYLVRSELDNR</sequence>
<evidence type="ECO:0000255" key="1">
    <source>
        <dbReference type="HAMAP-Rule" id="MF_00827"/>
    </source>
</evidence>
<keyword id="KW-1185">Reference proteome</keyword>
<proteinExistence type="inferred from homology"/>
<dbReference type="EMBL" id="CP001389">
    <property type="protein sequence ID" value="ACP24884.1"/>
    <property type="molecule type" value="Genomic_DNA"/>
</dbReference>
<dbReference type="RefSeq" id="WP_012707667.1">
    <property type="nucleotide sequence ID" value="NC_012587.1"/>
</dbReference>
<dbReference type="RefSeq" id="YP_002825637.1">
    <property type="nucleotide sequence ID" value="NC_012587.1"/>
</dbReference>
<dbReference type="STRING" id="394.NGR_c10980"/>
<dbReference type="KEGG" id="rhi:NGR_c10980"/>
<dbReference type="PATRIC" id="fig|394.7.peg.3925"/>
<dbReference type="eggNOG" id="COG3811">
    <property type="taxonomic scope" value="Bacteria"/>
</dbReference>
<dbReference type="HOGENOM" id="CLU_164736_0_0_5"/>
<dbReference type="OrthoDB" id="7204880at2"/>
<dbReference type="Proteomes" id="UP000001054">
    <property type="component" value="Chromosome"/>
</dbReference>
<dbReference type="HAMAP" id="MF_00827">
    <property type="entry name" value="UPF0386"/>
    <property type="match status" value="1"/>
</dbReference>
<dbReference type="InterPro" id="IPR018654">
    <property type="entry name" value="YjhX_toxin"/>
</dbReference>
<dbReference type="NCBIfam" id="NF010240">
    <property type="entry name" value="PRK13687.1"/>
    <property type="match status" value="1"/>
</dbReference>
<dbReference type="Pfam" id="PF09857">
    <property type="entry name" value="YjhX_toxin"/>
    <property type="match status" value="1"/>
</dbReference>
<accession>C3MAA5</accession>
<comment type="similarity">
    <text evidence="1">Belongs to the UPF0386 family.</text>
</comment>
<reference key="1">
    <citation type="journal article" date="2009" name="Appl. Environ. Microbiol.">
        <title>Rhizobium sp. strain NGR234 possesses a remarkable number of secretion systems.</title>
        <authorList>
            <person name="Schmeisser C."/>
            <person name="Liesegang H."/>
            <person name="Krysciak D."/>
            <person name="Bakkou N."/>
            <person name="Le Quere A."/>
            <person name="Wollherr A."/>
            <person name="Heinemeyer I."/>
            <person name="Morgenstern B."/>
            <person name="Pommerening-Roeser A."/>
            <person name="Flores M."/>
            <person name="Palacios R."/>
            <person name="Brenner S."/>
            <person name="Gottschalk G."/>
            <person name="Schmitz R.A."/>
            <person name="Broughton W.J."/>
            <person name="Perret X."/>
            <person name="Strittmatter A.W."/>
            <person name="Streit W.R."/>
        </authorList>
    </citation>
    <scope>NUCLEOTIDE SEQUENCE [LARGE SCALE GENOMIC DNA]</scope>
    <source>
        <strain>NBRC 101917 / NGR234</strain>
    </source>
</reference>
<feature type="chain" id="PRO_1000148770" description="UPF0386 protein NGR_c10980">
    <location>
        <begin position="1"/>
        <end position="84"/>
    </location>
</feature>
<name>Y1098_SINFN</name>
<gene>
    <name type="ordered locus">NGR_c10980</name>
</gene>
<protein>
    <recommendedName>
        <fullName evidence="1">UPF0386 protein NGR_c10980</fullName>
    </recommendedName>
</protein>